<proteinExistence type="evidence at protein level"/>
<protein>
    <recommendedName>
        <fullName>Protein TIC 22, chloroplastic</fullName>
    </recommendedName>
    <alternativeName>
        <fullName>Translocon at the inner envelope membrane of chloroplasts 22</fullName>
        <shortName>AtTIC22</shortName>
    </alternativeName>
</protein>
<sequence>MESSVKPNPFLSFSSFIHHQCTRFSSDLSARIEDTKRFAETLATRRFSLPTPPPFASVSQSKSGTPTTTLSPSLVAKALAGTSVFTVSNTNNEFVLISDPTGGKSIGLLCFRQEDAEAFLAQARLRRRELKTNAKVVPITLDQVYLLKVEGISFRFLPDPIQIKNALELKSSGNKNGFDGVPVFQSELLVVRKKNRRYCPVYFSKEDIERELSKYTRASRGDQQIMVGSLEDVLRKMEMSEKNSGWEDVIFIPPGRSYAQHMQDLIKE</sequence>
<comment type="function">
    <text evidence="1">Involved in protein precursor import into chloroplasts. Imported into the intermembrane space via the Toc translocon. May be involved in the import pathway used by proteins without a cleavable N-terminal pre-sequence (By similarity).</text>
</comment>
<comment type="subunit">
    <text evidence="1 3">Part of the Tic complex (By similarity). Interacts with OEP61 during its transport into the intermembrane space.</text>
</comment>
<comment type="subcellular location">
    <subcellularLocation>
        <location evidence="1">Plastid</location>
        <location evidence="1">Chloroplast intermembrane space</location>
        <topology evidence="1">Peripheral membrane protein</topology>
    </subcellularLocation>
</comment>
<comment type="alternative products">
    <event type="alternative splicing"/>
    <isoform>
        <id>Q9SZB2-1</id>
        <name>1</name>
        <sequence type="displayed"/>
    </isoform>
    <isoform>
        <id>Q9SZB2-2</id>
        <name>2</name>
        <sequence type="described" ref="VSP_041953"/>
    </isoform>
</comment>
<comment type="similarity">
    <text evidence="4">Belongs to the Tic22 family.</text>
</comment>
<name>TIC22_ARATH</name>
<reference key="1">
    <citation type="journal article" date="1999" name="Nature">
        <title>Sequence and analysis of chromosome 4 of the plant Arabidopsis thaliana.</title>
        <authorList>
            <person name="Mayer K.F.X."/>
            <person name="Schueller C."/>
            <person name="Wambutt R."/>
            <person name="Murphy G."/>
            <person name="Volckaert G."/>
            <person name="Pohl T."/>
            <person name="Duesterhoeft A."/>
            <person name="Stiekema W."/>
            <person name="Entian K.-D."/>
            <person name="Terryn N."/>
            <person name="Harris B."/>
            <person name="Ansorge W."/>
            <person name="Brandt P."/>
            <person name="Grivell L.A."/>
            <person name="Rieger M."/>
            <person name="Weichselgartner M."/>
            <person name="de Simone V."/>
            <person name="Obermaier B."/>
            <person name="Mache R."/>
            <person name="Mueller M."/>
            <person name="Kreis M."/>
            <person name="Delseny M."/>
            <person name="Puigdomenech P."/>
            <person name="Watson M."/>
            <person name="Schmidtheini T."/>
            <person name="Reichert B."/>
            <person name="Portetelle D."/>
            <person name="Perez-Alonso M."/>
            <person name="Boutry M."/>
            <person name="Bancroft I."/>
            <person name="Vos P."/>
            <person name="Hoheisel J."/>
            <person name="Zimmermann W."/>
            <person name="Wedler H."/>
            <person name="Ridley P."/>
            <person name="Langham S.-A."/>
            <person name="McCullagh B."/>
            <person name="Bilham L."/>
            <person name="Robben J."/>
            <person name="van der Schueren J."/>
            <person name="Grymonprez B."/>
            <person name="Chuang Y.-J."/>
            <person name="Vandenbussche F."/>
            <person name="Braeken M."/>
            <person name="Weltjens I."/>
            <person name="Voet M."/>
            <person name="Bastiaens I."/>
            <person name="Aert R."/>
            <person name="Defoor E."/>
            <person name="Weitzenegger T."/>
            <person name="Bothe G."/>
            <person name="Ramsperger U."/>
            <person name="Hilbert H."/>
            <person name="Braun M."/>
            <person name="Holzer E."/>
            <person name="Brandt A."/>
            <person name="Peters S."/>
            <person name="van Staveren M."/>
            <person name="Dirkse W."/>
            <person name="Mooijman P."/>
            <person name="Klein Lankhorst R."/>
            <person name="Rose M."/>
            <person name="Hauf J."/>
            <person name="Koetter P."/>
            <person name="Berneiser S."/>
            <person name="Hempel S."/>
            <person name="Feldpausch M."/>
            <person name="Lamberth S."/>
            <person name="Van den Daele H."/>
            <person name="De Keyser A."/>
            <person name="Buysshaert C."/>
            <person name="Gielen J."/>
            <person name="Villarroel R."/>
            <person name="De Clercq R."/>
            <person name="van Montagu M."/>
            <person name="Rogers J."/>
            <person name="Cronin A."/>
            <person name="Quail M.A."/>
            <person name="Bray-Allen S."/>
            <person name="Clark L."/>
            <person name="Doggett J."/>
            <person name="Hall S."/>
            <person name="Kay M."/>
            <person name="Lennard N."/>
            <person name="McLay K."/>
            <person name="Mayes R."/>
            <person name="Pettett A."/>
            <person name="Rajandream M.A."/>
            <person name="Lyne M."/>
            <person name="Benes V."/>
            <person name="Rechmann S."/>
            <person name="Borkova D."/>
            <person name="Bloecker H."/>
            <person name="Scharfe M."/>
            <person name="Grimm M."/>
            <person name="Loehnert T.-H."/>
            <person name="Dose S."/>
            <person name="de Haan M."/>
            <person name="Maarse A.C."/>
            <person name="Schaefer M."/>
            <person name="Mueller-Auer S."/>
            <person name="Gabel C."/>
            <person name="Fuchs M."/>
            <person name="Fartmann B."/>
            <person name="Granderath K."/>
            <person name="Dauner D."/>
            <person name="Herzl A."/>
            <person name="Neumann S."/>
            <person name="Argiriou A."/>
            <person name="Vitale D."/>
            <person name="Liguori R."/>
            <person name="Piravandi E."/>
            <person name="Massenet O."/>
            <person name="Quigley F."/>
            <person name="Clabauld G."/>
            <person name="Muendlein A."/>
            <person name="Felber R."/>
            <person name="Schnabl S."/>
            <person name="Hiller R."/>
            <person name="Schmidt W."/>
            <person name="Lecharny A."/>
            <person name="Aubourg S."/>
            <person name="Chefdor F."/>
            <person name="Cooke R."/>
            <person name="Berger C."/>
            <person name="Monfort A."/>
            <person name="Casacuberta E."/>
            <person name="Gibbons T."/>
            <person name="Weber N."/>
            <person name="Vandenbol M."/>
            <person name="Bargues M."/>
            <person name="Terol J."/>
            <person name="Torres A."/>
            <person name="Perez-Perez A."/>
            <person name="Purnelle B."/>
            <person name="Bent E."/>
            <person name="Johnson S."/>
            <person name="Tacon D."/>
            <person name="Jesse T."/>
            <person name="Heijnen L."/>
            <person name="Schwarz S."/>
            <person name="Scholler P."/>
            <person name="Heber S."/>
            <person name="Francs P."/>
            <person name="Bielke C."/>
            <person name="Frishman D."/>
            <person name="Haase D."/>
            <person name="Lemcke K."/>
            <person name="Mewes H.-W."/>
            <person name="Stocker S."/>
            <person name="Zaccaria P."/>
            <person name="Bevan M."/>
            <person name="Wilson R.K."/>
            <person name="de la Bastide M."/>
            <person name="Habermann K."/>
            <person name="Parnell L."/>
            <person name="Dedhia N."/>
            <person name="Gnoj L."/>
            <person name="Schutz K."/>
            <person name="Huang E."/>
            <person name="Spiegel L."/>
            <person name="Sekhon M."/>
            <person name="Murray J."/>
            <person name="Sheet P."/>
            <person name="Cordes M."/>
            <person name="Abu-Threideh J."/>
            <person name="Stoneking T."/>
            <person name="Kalicki J."/>
            <person name="Graves T."/>
            <person name="Harmon G."/>
            <person name="Edwards J."/>
            <person name="Latreille P."/>
            <person name="Courtney L."/>
            <person name="Cloud J."/>
            <person name="Abbott A."/>
            <person name="Scott K."/>
            <person name="Johnson D."/>
            <person name="Minx P."/>
            <person name="Bentley D."/>
            <person name="Fulton B."/>
            <person name="Miller N."/>
            <person name="Greco T."/>
            <person name="Kemp K."/>
            <person name="Kramer J."/>
            <person name="Fulton L."/>
            <person name="Mardis E."/>
            <person name="Dante M."/>
            <person name="Pepin K."/>
            <person name="Hillier L.W."/>
            <person name="Nelson J."/>
            <person name="Spieth J."/>
            <person name="Ryan E."/>
            <person name="Andrews S."/>
            <person name="Geisel C."/>
            <person name="Layman D."/>
            <person name="Du H."/>
            <person name="Ali J."/>
            <person name="Berghoff A."/>
            <person name="Jones K."/>
            <person name="Drone K."/>
            <person name="Cotton M."/>
            <person name="Joshu C."/>
            <person name="Antonoiu B."/>
            <person name="Zidanic M."/>
            <person name="Strong C."/>
            <person name="Sun H."/>
            <person name="Lamar B."/>
            <person name="Yordan C."/>
            <person name="Ma P."/>
            <person name="Zhong J."/>
            <person name="Preston R."/>
            <person name="Vil D."/>
            <person name="Shekher M."/>
            <person name="Matero A."/>
            <person name="Shah R."/>
            <person name="Swaby I.K."/>
            <person name="O'Shaughnessy A."/>
            <person name="Rodriguez M."/>
            <person name="Hoffman J."/>
            <person name="Till S."/>
            <person name="Granat S."/>
            <person name="Shohdy N."/>
            <person name="Hasegawa A."/>
            <person name="Hameed A."/>
            <person name="Lodhi M."/>
            <person name="Johnson A."/>
            <person name="Chen E."/>
            <person name="Marra M.A."/>
            <person name="Martienssen R."/>
            <person name="McCombie W.R."/>
        </authorList>
    </citation>
    <scope>NUCLEOTIDE SEQUENCE [LARGE SCALE GENOMIC DNA]</scope>
    <source>
        <strain>cv. Columbia</strain>
    </source>
</reference>
<reference key="2">
    <citation type="journal article" date="2017" name="Plant J.">
        <title>Araport11: a complete reannotation of the Arabidopsis thaliana reference genome.</title>
        <authorList>
            <person name="Cheng C.Y."/>
            <person name="Krishnakumar V."/>
            <person name="Chan A.P."/>
            <person name="Thibaud-Nissen F."/>
            <person name="Schobel S."/>
            <person name="Town C.D."/>
        </authorList>
    </citation>
    <scope>GENOME REANNOTATION</scope>
    <source>
        <strain>cv. Columbia</strain>
    </source>
</reference>
<reference key="3">
    <citation type="journal article" date="2002" name="Science">
        <title>Functional annotation of a full-length Arabidopsis cDNA collection.</title>
        <authorList>
            <person name="Seki M."/>
            <person name="Narusaka M."/>
            <person name="Kamiya A."/>
            <person name="Ishida J."/>
            <person name="Satou M."/>
            <person name="Sakurai T."/>
            <person name="Nakajima M."/>
            <person name="Enju A."/>
            <person name="Akiyama K."/>
            <person name="Oono Y."/>
            <person name="Muramatsu M."/>
            <person name="Hayashizaki Y."/>
            <person name="Kawai J."/>
            <person name="Carninci P."/>
            <person name="Itoh M."/>
            <person name="Ishii Y."/>
            <person name="Arakawa T."/>
            <person name="Shibata K."/>
            <person name="Shinagawa A."/>
            <person name="Shinozaki K."/>
        </authorList>
    </citation>
    <scope>NUCLEOTIDE SEQUENCE [LARGE SCALE MRNA] (ISOFORM 1)</scope>
    <source>
        <strain>cv. Columbia</strain>
    </source>
</reference>
<reference key="4">
    <citation type="journal article" date="2003" name="Science">
        <title>Empirical analysis of transcriptional activity in the Arabidopsis genome.</title>
        <authorList>
            <person name="Yamada K."/>
            <person name="Lim J."/>
            <person name="Dale J.M."/>
            <person name="Chen H."/>
            <person name="Shinn P."/>
            <person name="Palm C.J."/>
            <person name="Southwick A.M."/>
            <person name="Wu H.C."/>
            <person name="Kim C.J."/>
            <person name="Nguyen M."/>
            <person name="Pham P.K."/>
            <person name="Cheuk R.F."/>
            <person name="Karlin-Newmann G."/>
            <person name="Liu S.X."/>
            <person name="Lam B."/>
            <person name="Sakano H."/>
            <person name="Wu T."/>
            <person name="Yu G."/>
            <person name="Miranda M."/>
            <person name="Quach H.L."/>
            <person name="Tripp M."/>
            <person name="Chang C.H."/>
            <person name="Lee J.M."/>
            <person name="Toriumi M.J."/>
            <person name="Chan M.M."/>
            <person name="Tang C.C."/>
            <person name="Onodera C.S."/>
            <person name="Deng J.M."/>
            <person name="Akiyama K."/>
            <person name="Ansari Y."/>
            <person name="Arakawa T."/>
            <person name="Banh J."/>
            <person name="Banno F."/>
            <person name="Bowser L."/>
            <person name="Brooks S.Y."/>
            <person name="Carninci P."/>
            <person name="Chao Q."/>
            <person name="Choy N."/>
            <person name="Enju A."/>
            <person name="Goldsmith A.D."/>
            <person name="Gurjal M."/>
            <person name="Hansen N.F."/>
            <person name="Hayashizaki Y."/>
            <person name="Johnson-Hopson C."/>
            <person name="Hsuan V.W."/>
            <person name="Iida K."/>
            <person name="Karnes M."/>
            <person name="Khan S."/>
            <person name="Koesema E."/>
            <person name="Ishida J."/>
            <person name="Jiang P.X."/>
            <person name="Jones T."/>
            <person name="Kawai J."/>
            <person name="Kamiya A."/>
            <person name="Meyers C."/>
            <person name="Nakajima M."/>
            <person name="Narusaka M."/>
            <person name="Seki M."/>
            <person name="Sakurai T."/>
            <person name="Satou M."/>
            <person name="Tamse R."/>
            <person name="Vaysberg M."/>
            <person name="Wallender E.K."/>
            <person name="Wong C."/>
            <person name="Yamamura Y."/>
            <person name="Yuan S."/>
            <person name="Shinozaki K."/>
            <person name="Davis R.W."/>
            <person name="Theologis A."/>
            <person name="Ecker J.R."/>
        </authorList>
    </citation>
    <scope>NUCLEOTIDE SEQUENCE [LARGE SCALE MRNA] (ISOFORM 1)</scope>
    <source>
        <strain>cv. Columbia</strain>
    </source>
</reference>
<reference key="5">
    <citation type="journal article" date="2011" name="Biochem. J.">
        <title>OEP61 is a chaperone receptor at the plastid outer envelope.</title>
        <authorList>
            <person name="von Loeffelholz O."/>
            <person name="Kriechbaumer V."/>
            <person name="Ewan R.A."/>
            <person name="Jonczyk R."/>
            <person name="Lehmann S."/>
            <person name="Young J.C."/>
            <person name="Abell B.M."/>
        </authorList>
    </citation>
    <scope>INTERACTION WITH OEP61</scope>
</reference>
<reference key="6">
    <citation type="journal article" date="2010" name="Biochim. Biophys. Acta">
        <title>Protein import into chloroplasts: the Tic complex and its regulation.</title>
        <authorList>
            <person name="Kovacs-Bogdan E."/>
            <person name="Soll J."/>
            <person name="Bolter B."/>
        </authorList>
    </citation>
    <scope>REVIEW</scope>
</reference>
<accession>Q9SZB2</accession>
<accession>F4JIW4</accession>
<keyword id="KW-0025">Alternative splicing</keyword>
<keyword id="KW-0150">Chloroplast</keyword>
<keyword id="KW-0472">Membrane</keyword>
<keyword id="KW-0934">Plastid</keyword>
<keyword id="KW-0653">Protein transport</keyword>
<keyword id="KW-1185">Reference proteome</keyword>
<keyword id="KW-0809">Transit peptide</keyword>
<keyword id="KW-0813">Transport</keyword>
<dbReference type="EMBL" id="AL035678">
    <property type="protein sequence ID" value="CAB38793.1"/>
    <property type="molecule type" value="Genomic_DNA"/>
</dbReference>
<dbReference type="EMBL" id="AL161583">
    <property type="protein sequence ID" value="CAB80052.1"/>
    <property type="molecule type" value="Genomic_DNA"/>
</dbReference>
<dbReference type="EMBL" id="CP002687">
    <property type="protein sequence ID" value="AEE86209.1"/>
    <property type="molecule type" value="Genomic_DNA"/>
</dbReference>
<dbReference type="EMBL" id="CP002687">
    <property type="protein sequence ID" value="AEE86210.1"/>
    <property type="molecule type" value="Genomic_DNA"/>
</dbReference>
<dbReference type="EMBL" id="AK118805">
    <property type="protein sequence ID" value="BAC43395.1"/>
    <property type="molecule type" value="mRNA"/>
</dbReference>
<dbReference type="EMBL" id="BT005417">
    <property type="protein sequence ID" value="AAO63837.1"/>
    <property type="molecule type" value="mRNA"/>
</dbReference>
<dbReference type="PIR" id="T05986">
    <property type="entry name" value="T05986"/>
</dbReference>
<dbReference type="RefSeq" id="NP_001190901.1">
    <molecule id="Q9SZB2-2"/>
    <property type="nucleotide sequence ID" value="NM_001203972.1"/>
</dbReference>
<dbReference type="RefSeq" id="NP_195061.1">
    <molecule id="Q9SZB2-1"/>
    <property type="nucleotide sequence ID" value="NM_119489.4"/>
</dbReference>
<dbReference type="SMR" id="Q9SZB2"/>
<dbReference type="BioGRID" id="14755">
    <property type="interactions" value="11"/>
</dbReference>
<dbReference type="FunCoup" id="Q9SZB2">
    <property type="interactions" value="846"/>
</dbReference>
<dbReference type="IntAct" id="Q9SZB2">
    <property type="interactions" value="10"/>
</dbReference>
<dbReference type="STRING" id="3702.Q9SZB2"/>
<dbReference type="iPTMnet" id="Q9SZB2"/>
<dbReference type="PaxDb" id="3702-AT4G33350.1"/>
<dbReference type="ProteomicsDB" id="234428">
    <molecule id="Q9SZB2-1"/>
</dbReference>
<dbReference type="EnsemblPlants" id="AT4G33350.1">
    <molecule id="Q9SZB2-1"/>
    <property type="protein sequence ID" value="AT4G33350.1"/>
    <property type="gene ID" value="AT4G33350"/>
</dbReference>
<dbReference type="EnsemblPlants" id="AT4G33350.2">
    <molecule id="Q9SZB2-2"/>
    <property type="protein sequence ID" value="AT4G33350.2"/>
    <property type="gene ID" value="AT4G33350"/>
</dbReference>
<dbReference type="GeneID" id="829471"/>
<dbReference type="Gramene" id="AT4G33350.1">
    <molecule id="Q9SZB2-1"/>
    <property type="protein sequence ID" value="AT4G33350.1"/>
    <property type="gene ID" value="AT4G33350"/>
</dbReference>
<dbReference type="Gramene" id="AT4G33350.2">
    <molecule id="Q9SZB2-2"/>
    <property type="protein sequence ID" value="AT4G33350.2"/>
    <property type="gene ID" value="AT4G33350"/>
</dbReference>
<dbReference type="KEGG" id="ath:AT4G33350"/>
<dbReference type="Araport" id="AT4G33350"/>
<dbReference type="TAIR" id="AT4G33350">
    <property type="gene designation" value="TIC22-IV"/>
</dbReference>
<dbReference type="eggNOG" id="ENOG502QPNF">
    <property type="taxonomic scope" value="Eukaryota"/>
</dbReference>
<dbReference type="InParanoid" id="Q9SZB2"/>
<dbReference type="OMA" id="DMIFIPP"/>
<dbReference type="OrthoDB" id="196308at2759"/>
<dbReference type="PhylomeDB" id="Q9SZB2"/>
<dbReference type="PRO" id="PR:Q9SZB2"/>
<dbReference type="Proteomes" id="UP000006548">
    <property type="component" value="Chromosome 4"/>
</dbReference>
<dbReference type="ExpressionAtlas" id="Q9SZB2">
    <property type="expression patterns" value="baseline and differential"/>
</dbReference>
<dbReference type="GO" id="GO:0009507">
    <property type="term" value="C:chloroplast"/>
    <property type="evidence" value="ECO:0007005"/>
    <property type="project" value="TAIR"/>
</dbReference>
<dbReference type="GO" id="GO:0009941">
    <property type="term" value="C:chloroplast envelope"/>
    <property type="evidence" value="ECO:0007005"/>
    <property type="project" value="TAIR"/>
</dbReference>
<dbReference type="GO" id="GO:0031972">
    <property type="term" value="C:chloroplast intermembrane space"/>
    <property type="evidence" value="ECO:0007669"/>
    <property type="project" value="UniProtKB-SubCell"/>
</dbReference>
<dbReference type="GO" id="GO:0005886">
    <property type="term" value="C:plasma membrane"/>
    <property type="evidence" value="ECO:0007005"/>
    <property type="project" value="TAIR"/>
</dbReference>
<dbReference type="GO" id="GO:0009536">
    <property type="term" value="C:plastid"/>
    <property type="evidence" value="ECO:0007005"/>
    <property type="project" value="TAIR"/>
</dbReference>
<dbReference type="GO" id="GO:0015031">
    <property type="term" value="P:protein transport"/>
    <property type="evidence" value="ECO:0007669"/>
    <property type="project" value="UniProtKB-KW"/>
</dbReference>
<dbReference type="FunFam" id="3.40.1350.100:FF:000001">
    <property type="entry name" value="Protein TIC 22, chloroplastic"/>
    <property type="match status" value="1"/>
</dbReference>
<dbReference type="Gene3D" id="3.40.1350.100">
    <property type="match status" value="2"/>
</dbReference>
<dbReference type="InterPro" id="IPR005692">
    <property type="entry name" value="Tic22"/>
</dbReference>
<dbReference type="InterPro" id="IPR007378">
    <property type="entry name" value="Tic22-like"/>
</dbReference>
<dbReference type="NCBIfam" id="TIGR00995">
    <property type="entry name" value="3a0901s06TIC22"/>
    <property type="match status" value="1"/>
</dbReference>
<dbReference type="PANTHER" id="PTHR33926">
    <property type="entry name" value="PROTEIN TIC 22, CHLOROPLASTIC"/>
    <property type="match status" value="1"/>
</dbReference>
<dbReference type="PANTHER" id="PTHR33926:SF4">
    <property type="entry name" value="PROTEIN TIC 22, CHLOROPLASTIC"/>
    <property type="match status" value="1"/>
</dbReference>
<dbReference type="Pfam" id="PF04278">
    <property type="entry name" value="Tic22"/>
    <property type="match status" value="1"/>
</dbReference>
<evidence type="ECO:0000250" key="1"/>
<evidence type="ECO:0000255" key="2"/>
<evidence type="ECO:0000269" key="3">
    <source>
    </source>
</evidence>
<evidence type="ECO:0000305" key="4"/>
<gene>
    <name type="primary">TIC22</name>
    <name type="synonym">TIC22-IV</name>
    <name type="ordered locus">At4g33350</name>
    <name type="ORF">F17M5.110</name>
</gene>
<organism>
    <name type="scientific">Arabidopsis thaliana</name>
    <name type="common">Mouse-ear cress</name>
    <dbReference type="NCBI Taxonomy" id="3702"/>
    <lineage>
        <taxon>Eukaryota</taxon>
        <taxon>Viridiplantae</taxon>
        <taxon>Streptophyta</taxon>
        <taxon>Embryophyta</taxon>
        <taxon>Tracheophyta</taxon>
        <taxon>Spermatophyta</taxon>
        <taxon>Magnoliopsida</taxon>
        <taxon>eudicotyledons</taxon>
        <taxon>Gunneridae</taxon>
        <taxon>Pentapetalae</taxon>
        <taxon>rosids</taxon>
        <taxon>malvids</taxon>
        <taxon>Brassicales</taxon>
        <taxon>Brassicaceae</taxon>
        <taxon>Camelineae</taxon>
        <taxon>Arabidopsis</taxon>
    </lineage>
</organism>
<feature type="transit peptide" description="Chloroplast" evidence="2">
    <location>
        <begin position="1"/>
        <end position="59"/>
    </location>
</feature>
<feature type="chain" id="PRO_0000413670" description="Protein TIC 22, chloroplastic">
    <location>
        <begin position="60"/>
        <end position="268"/>
    </location>
</feature>
<feature type="splice variant" id="VSP_041953" description="In isoform 2." evidence="4">
    <location>
        <begin position="201"/>
        <end position="226"/>
    </location>
</feature>